<organism>
    <name type="scientific">Staphylococcus aureus (strain MSSA476)</name>
    <dbReference type="NCBI Taxonomy" id="282459"/>
    <lineage>
        <taxon>Bacteria</taxon>
        <taxon>Bacillati</taxon>
        <taxon>Bacillota</taxon>
        <taxon>Bacilli</taxon>
        <taxon>Bacillales</taxon>
        <taxon>Staphylococcaceae</taxon>
        <taxon>Staphylococcus</taxon>
    </lineage>
</organism>
<gene>
    <name evidence="1" type="primary">rpoZ</name>
    <name type="ordered locus">SAS1144</name>
</gene>
<protein>
    <recommendedName>
        <fullName evidence="1">DNA-directed RNA polymerase subunit omega</fullName>
        <shortName evidence="1">RNAP omega subunit</shortName>
        <ecNumber evidence="1">2.7.7.6</ecNumber>
    </recommendedName>
    <alternativeName>
        <fullName evidence="1">RNA polymerase omega subunit</fullName>
    </alternativeName>
    <alternativeName>
        <fullName evidence="1">Transcriptase subunit omega</fullName>
    </alternativeName>
</protein>
<accession>Q6GA03</accession>
<sequence length="72" mass="8150">MLNPPLNQLTSQIKSKYLIATTAAKRAREIDEQPETELLSEYHSFKPVGRALEEIADGKIRPVISSDYYGKE</sequence>
<feature type="chain" id="PRO_0000128981" description="DNA-directed RNA polymerase subunit omega">
    <location>
        <begin position="1"/>
        <end position="72"/>
    </location>
</feature>
<comment type="function">
    <text evidence="1">Promotes RNA polymerase assembly. Latches the N- and C-terminal regions of the beta' subunit thereby facilitating its interaction with the beta and alpha subunits.</text>
</comment>
<comment type="catalytic activity">
    <reaction evidence="1">
        <text>RNA(n) + a ribonucleoside 5'-triphosphate = RNA(n+1) + diphosphate</text>
        <dbReference type="Rhea" id="RHEA:21248"/>
        <dbReference type="Rhea" id="RHEA-COMP:14527"/>
        <dbReference type="Rhea" id="RHEA-COMP:17342"/>
        <dbReference type="ChEBI" id="CHEBI:33019"/>
        <dbReference type="ChEBI" id="CHEBI:61557"/>
        <dbReference type="ChEBI" id="CHEBI:140395"/>
        <dbReference type="EC" id="2.7.7.6"/>
    </reaction>
</comment>
<comment type="subunit">
    <text evidence="1">The RNAP catalytic core consists of 2 alpha, 1 beta, 1 beta' and 1 omega subunit. When a sigma factor is associated with the core the holoenzyme is formed, which can initiate transcription.</text>
</comment>
<comment type="similarity">
    <text evidence="1">Belongs to the RNA polymerase subunit omega family.</text>
</comment>
<proteinExistence type="inferred from homology"/>
<keyword id="KW-0240">DNA-directed RNA polymerase</keyword>
<keyword id="KW-0548">Nucleotidyltransferase</keyword>
<keyword id="KW-0804">Transcription</keyword>
<keyword id="KW-0808">Transferase</keyword>
<dbReference type="EC" id="2.7.7.6" evidence="1"/>
<dbReference type="EMBL" id="BX571857">
    <property type="protein sequence ID" value="CAG42921.1"/>
    <property type="molecule type" value="Genomic_DNA"/>
</dbReference>
<dbReference type="RefSeq" id="WP_000933956.1">
    <property type="nucleotide sequence ID" value="NC_002953.3"/>
</dbReference>
<dbReference type="SMR" id="Q6GA03"/>
<dbReference type="KEGG" id="sas:SAS1144"/>
<dbReference type="HOGENOM" id="CLU_125406_6_0_9"/>
<dbReference type="GO" id="GO:0000428">
    <property type="term" value="C:DNA-directed RNA polymerase complex"/>
    <property type="evidence" value="ECO:0007669"/>
    <property type="project" value="UniProtKB-KW"/>
</dbReference>
<dbReference type="GO" id="GO:0003677">
    <property type="term" value="F:DNA binding"/>
    <property type="evidence" value="ECO:0007669"/>
    <property type="project" value="UniProtKB-UniRule"/>
</dbReference>
<dbReference type="GO" id="GO:0003899">
    <property type="term" value="F:DNA-directed RNA polymerase activity"/>
    <property type="evidence" value="ECO:0007669"/>
    <property type="project" value="UniProtKB-UniRule"/>
</dbReference>
<dbReference type="GO" id="GO:0006351">
    <property type="term" value="P:DNA-templated transcription"/>
    <property type="evidence" value="ECO:0007669"/>
    <property type="project" value="UniProtKB-UniRule"/>
</dbReference>
<dbReference type="Gene3D" id="3.90.940.10">
    <property type="match status" value="1"/>
</dbReference>
<dbReference type="HAMAP" id="MF_00366">
    <property type="entry name" value="RNApol_bact_RpoZ"/>
    <property type="match status" value="1"/>
</dbReference>
<dbReference type="InterPro" id="IPR003716">
    <property type="entry name" value="DNA-dir_RNA_pol_omega"/>
</dbReference>
<dbReference type="InterPro" id="IPR006110">
    <property type="entry name" value="Pol_omega/Rpo6/RPB6"/>
</dbReference>
<dbReference type="InterPro" id="IPR036161">
    <property type="entry name" value="RPB6/omega-like_sf"/>
</dbReference>
<dbReference type="NCBIfam" id="TIGR00690">
    <property type="entry name" value="rpoZ"/>
    <property type="match status" value="1"/>
</dbReference>
<dbReference type="PANTHER" id="PTHR34476">
    <property type="entry name" value="DNA-DIRECTED RNA POLYMERASE SUBUNIT OMEGA"/>
    <property type="match status" value="1"/>
</dbReference>
<dbReference type="PANTHER" id="PTHR34476:SF1">
    <property type="entry name" value="DNA-DIRECTED RNA POLYMERASE SUBUNIT OMEGA"/>
    <property type="match status" value="1"/>
</dbReference>
<dbReference type="Pfam" id="PF01192">
    <property type="entry name" value="RNA_pol_Rpb6"/>
    <property type="match status" value="1"/>
</dbReference>
<dbReference type="SMART" id="SM01409">
    <property type="entry name" value="RNA_pol_Rpb6"/>
    <property type="match status" value="1"/>
</dbReference>
<dbReference type="SUPFAM" id="SSF63562">
    <property type="entry name" value="RPB6/omega subunit-like"/>
    <property type="match status" value="1"/>
</dbReference>
<reference key="1">
    <citation type="journal article" date="2004" name="Proc. Natl. Acad. Sci. U.S.A.">
        <title>Complete genomes of two clinical Staphylococcus aureus strains: evidence for the rapid evolution of virulence and drug resistance.</title>
        <authorList>
            <person name="Holden M.T.G."/>
            <person name="Feil E.J."/>
            <person name="Lindsay J.A."/>
            <person name="Peacock S.J."/>
            <person name="Day N.P.J."/>
            <person name="Enright M.C."/>
            <person name="Foster T.J."/>
            <person name="Moore C.E."/>
            <person name="Hurst L."/>
            <person name="Atkin R."/>
            <person name="Barron A."/>
            <person name="Bason N."/>
            <person name="Bentley S.D."/>
            <person name="Chillingworth C."/>
            <person name="Chillingworth T."/>
            <person name="Churcher C."/>
            <person name="Clark L."/>
            <person name="Corton C."/>
            <person name="Cronin A."/>
            <person name="Doggett J."/>
            <person name="Dowd L."/>
            <person name="Feltwell T."/>
            <person name="Hance Z."/>
            <person name="Harris B."/>
            <person name="Hauser H."/>
            <person name="Holroyd S."/>
            <person name="Jagels K."/>
            <person name="James K.D."/>
            <person name="Lennard N."/>
            <person name="Line A."/>
            <person name="Mayes R."/>
            <person name="Moule S."/>
            <person name="Mungall K."/>
            <person name="Ormond D."/>
            <person name="Quail M.A."/>
            <person name="Rabbinowitsch E."/>
            <person name="Rutherford K.M."/>
            <person name="Sanders M."/>
            <person name="Sharp S."/>
            <person name="Simmonds M."/>
            <person name="Stevens K."/>
            <person name="Whitehead S."/>
            <person name="Barrell B.G."/>
            <person name="Spratt B.G."/>
            <person name="Parkhill J."/>
        </authorList>
    </citation>
    <scope>NUCLEOTIDE SEQUENCE [LARGE SCALE GENOMIC DNA]</scope>
    <source>
        <strain>MSSA476</strain>
    </source>
</reference>
<evidence type="ECO:0000255" key="1">
    <source>
        <dbReference type="HAMAP-Rule" id="MF_00366"/>
    </source>
</evidence>
<name>RPOZ_STAAS</name>